<organism>
    <name type="scientific">Arabidopsis thaliana</name>
    <name type="common">Mouse-ear cress</name>
    <dbReference type="NCBI Taxonomy" id="3702"/>
    <lineage>
        <taxon>Eukaryota</taxon>
        <taxon>Viridiplantae</taxon>
        <taxon>Streptophyta</taxon>
        <taxon>Embryophyta</taxon>
        <taxon>Tracheophyta</taxon>
        <taxon>Spermatophyta</taxon>
        <taxon>Magnoliopsida</taxon>
        <taxon>eudicotyledons</taxon>
        <taxon>Gunneridae</taxon>
        <taxon>Pentapetalae</taxon>
        <taxon>rosids</taxon>
        <taxon>malvids</taxon>
        <taxon>Brassicales</taxon>
        <taxon>Brassicaceae</taxon>
        <taxon>Camelineae</taxon>
        <taxon>Arabidopsis</taxon>
    </lineage>
</organism>
<name>ATL60_ARATH</name>
<accession>P0C035</accession>
<accession>Q4PSZ0</accession>
<reference key="1">
    <citation type="journal article" date="2000" name="Nature">
        <title>Sequence and analysis of chromosome 1 of the plant Arabidopsis thaliana.</title>
        <authorList>
            <person name="Theologis A."/>
            <person name="Ecker J.R."/>
            <person name="Palm C.J."/>
            <person name="Federspiel N.A."/>
            <person name="Kaul S."/>
            <person name="White O."/>
            <person name="Alonso J."/>
            <person name="Altafi H."/>
            <person name="Araujo R."/>
            <person name="Bowman C.L."/>
            <person name="Brooks S.Y."/>
            <person name="Buehler E."/>
            <person name="Chan A."/>
            <person name="Chao Q."/>
            <person name="Chen H."/>
            <person name="Cheuk R.F."/>
            <person name="Chin C.W."/>
            <person name="Chung M.K."/>
            <person name="Conn L."/>
            <person name="Conway A.B."/>
            <person name="Conway A.R."/>
            <person name="Creasy T.H."/>
            <person name="Dewar K."/>
            <person name="Dunn P."/>
            <person name="Etgu P."/>
            <person name="Feldblyum T.V."/>
            <person name="Feng J.-D."/>
            <person name="Fong B."/>
            <person name="Fujii C.Y."/>
            <person name="Gill J.E."/>
            <person name="Goldsmith A.D."/>
            <person name="Haas B."/>
            <person name="Hansen N.F."/>
            <person name="Hughes B."/>
            <person name="Huizar L."/>
            <person name="Hunter J.L."/>
            <person name="Jenkins J."/>
            <person name="Johnson-Hopson C."/>
            <person name="Khan S."/>
            <person name="Khaykin E."/>
            <person name="Kim C.J."/>
            <person name="Koo H.L."/>
            <person name="Kremenetskaia I."/>
            <person name="Kurtz D.B."/>
            <person name="Kwan A."/>
            <person name="Lam B."/>
            <person name="Langin-Hooper S."/>
            <person name="Lee A."/>
            <person name="Lee J.M."/>
            <person name="Lenz C.A."/>
            <person name="Li J.H."/>
            <person name="Li Y.-P."/>
            <person name="Lin X."/>
            <person name="Liu S.X."/>
            <person name="Liu Z.A."/>
            <person name="Luros J.S."/>
            <person name="Maiti R."/>
            <person name="Marziali A."/>
            <person name="Militscher J."/>
            <person name="Miranda M."/>
            <person name="Nguyen M."/>
            <person name="Nierman W.C."/>
            <person name="Osborne B.I."/>
            <person name="Pai G."/>
            <person name="Peterson J."/>
            <person name="Pham P.K."/>
            <person name="Rizzo M."/>
            <person name="Rooney T."/>
            <person name="Rowley D."/>
            <person name="Sakano H."/>
            <person name="Salzberg S.L."/>
            <person name="Schwartz J.R."/>
            <person name="Shinn P."/>
            <person name="Southwick A.M."/>
            <person name="Sun H."/>
            <person name="Tallon L.J."/>
            <person name="Tambunga G."/>
            <person name="Toriumi M.J."/>
            <person name="Town C.D."/>
            <person name="Utterback T."/>
            <person name="Van Aken S."/>
            <person name="Vaysberg M."/>
            <person name="Vysotskaia V.S."/>
            <person name="Walker M."/>
            <person name="Wu D."/>
            <person name="Yu G."/>
            <person name="Fraser C.M."/>
            <person name="Venter J.C."/>
            <person name="Davis R.W."/>
        </authorList>
    </citation>
    <scope>NUCLEOTIDE SEQUENCE [LARGE SCALE GENOMIC DNA]</scope>
    <source>
        <strain>cv. Columbia</strain>
    </source>
</reference>
<reference key="2">
    <citation type="journal article" date="2017" name="Plant J.">
        <title>Araport11: a complete reannotation of the Arabidopsis thaliana reference genome.</title>
        <authorList>
            <person name="Cheng C.Y."/>
            <person name="Krishnakumar V."/>
            <person name="Chan A.P."/>
            <person name="Thibaud-Nissen F."/>
            <person name="Schobel S."/>
            <person name="Town C.D."/>
        </authorList>
    </citation>
    <scope>GENOME REANNOTATION</scope>
    <source>
        <strain>cv. Columbia</strain>
    </source>
</reference>
<reference key="3">
    <citation type="submission" date="2005-05" db="EMBL/GenBank/DDBJ databases">
        <authorList>
            <person name="Underwood B.A."/>
            <person name="Xiao Y.-L."/>
            <person name="Moskal W.A. Jr."/>
            <person name="Monaghan E.L."/>
            <person name="Wang W."/>
            <person name="Redman J.C."/>
            <person name="Wu H.C."/>
            <person name="Utterback T."/>
            <person name="Town C.D."/>
        </authorList>
    </citation>
    <scope>NUCLEOTIDE SEQUENCE [LARGE SCALE MRNA]</scope>
    <source>
        <strain>cv. Columbia</strain>
    </source>
</reference>
<reference key="4">
    <citation type="journal article" date="2002" name="Genome Biol.">
        <title>Evaluation and classification of RING-finger domains encoded by the Arabidopsis genome.</title>
        <authorList>
            <person name="Kosarev P."/>
            <person name="Mayer K.F.X."/>
            <person name="Hardtke C.S."/>
        </authorList>
    </citation>
    <scope>GENE FAMILY ORGANIZATION</scope>
</reference>
<reference key="5">
    <citation type="journal article" date="2006" name="J. Mol. Evol.">
        <title>The ATL gene family from Arabidopsis thaliana and Oryza sativa comprises a large number of putative ubiquitin ligases of the RING-H2 type.</title>
        <authorList>
            <person name="Serrano M."/>
            <person name="Parra S."/>
            <person name="Alcaraz L.D."/>
            <person name="Guzman P."/>
        </authorList>
    </citation>
    <scope>NOMENCLATURE</scope>
    <scope>GENE FAMILY ORGANIZATION</scope>
</reference>
<sequence length="310" mass="34832">MDEESVSNGSLFSKFEGEETMGKVLLFSIVSIFTGILFLLLLHLYARLFWWRVEQHFNLNLIQSDDPGSTVIGRNPRRRRFVFAQSQEDPLHNAGLDSKILQSIHVVVFKCTDFKDGLECAVCLSDLVDGDKARVLPRCNHGFHVDCIDMWFQSHSTCPLCRNTVGSVEDTTHGGSEGLPQNQNFESGHSTNQHNPSQDQSFVHEFSTEPLSFPTNVLVWGDQNQVRSAGLVVTEESPSGNFAASYNDHQQESSSTRSQEVTAVVVDIPDNSSENLSERIDEEEPKSPMFTRLRLLKNVLSREKTNNNNV</sequence>
<comment type="catalytic activity">
    <reaction evidence="5">
        <text>S-ubiquitinyl-[E2 ubiquitin-conjugating enzyme]-L-cysteine + [acceptor protein]-L-lysine = [E2 ubiquitin-conjugating enzyme]-L-cysteine + N(6)-ubiquitinyl-[acceptor protein]-L-lysine.</text>
        <dbReference type="EC" id="2.3.2.27"/>
    </reaction>
</comment>
<comment type="pathway">
    <text>Protein modification; protein ubiquitination.</text>
</comment>
<comment type="subcellular location">
    <subcellularLocation>
        <location evidence="5">Membrane</location>
        <topology evidence="5">Single-pass membrane protein</topology>
    </subcellularLocation>
</comment>
<comment type="domain">
    <text evidence="1">The RING-type zinc finger domain mediates binding to an E2 ubiquitin-conjugating enzyme.</text>
</comment>
<comment type="similarity">
    <text evidence="5">Belongs to the RING-type zinc finger family. ATL subfamily.</text>
</comment>
<gene>
    <name type="primary">ATL60</name>
    <name type="ordered locus">At1g53820</name>
    <name type="ORF">T18A20.16</name>
</gene>
<feature type="chain" id="PRO_0000055770" description="RING-H2 finger protein ATL60">
    <location>
        <begin position="1"/>
        <end position="310"/>
    </location>
</feature>
<feature type="transmembrane region" description="Helical" evidence="2">
    <location>
        <begin position="24"/>
        <end position="44"/>
    </location>
</feature>
<feature type="zinc finger region" description="RING-type; atypical" evidence="3">
    <location>
        <begin position="120"/>
        <end position="162"/>
    </location>
</feature>
<feature type="region of interest" description="Disordered" evidence="4">
    <location>
        <begin position="170"/>
        <end position="201"/>
    </location>
</feature>
<feature type="region of interest" description="Disordered" evidence="4">
    <location>
        <begin position="240"/>
        <end position="260"/>
    </location>
</feature>
<feature type="compositionally biased region" description="Polar residues" evidence="4">
    <location>
        <begin position="179"/>
        <end position="201"/>
    </location>
</feature>
<protein>
    <recommendedName>
        <fullName>RING-H2 finger protein ATL60</fullName>
        <ecNumber evidence="5">2.3.2.27</ecNumber>
    </recommendedName>
    <alternativeName>
        <fullName evidence="5">RING-type E3 ubiquitin transferase ATL60</fullName>
    </alternativeName>
</protein>
<keyword id="KW-0472">Membrane</keyword>
<keyword id="KW-0479">Metal-binding</keyword>
<keyword id="KW-1185">Reference proteome</keyword>
<keyword id="KW-0808">Transferase</keyword>
<keyword id="KW-0812">Transmembrane</keyword>
<keyword id="KW-1133">Transmembrane helix</keyword>
<keyword id="KW-0833">Ubl conjugation pathway</keyword>
<keyword id="KW-0862">Zinc</keyword>
<keyword id="KW-0863">Zinc-finger</keyword>
<evidence type="ECO:0000250" key="1"/>
<evidence type="ECO:0000255" key="2"/>
<evidence type="ECO:0000255" key="3">
    <source>
        <dbReference type="PROSITE-ProRule" id="PRU00175"/>
    </source>
</evidence>
<evidence type="ECO:0000256" key="4">
    <source>
        <dbReference type="SAM" id="MobiDB-lite"/>
    </source>
</evidence>
<evidence type="ECO:0000305" key="5"/>
<dbReference type="EC" id="2.3.2.27" evidence="5"/>
<dbReference type="EMBL" id="AC009324">
    <property type="status" value="NOT_ANNOTATED_CDS"/>
    <property type="molecule type" value="Genomic_DNA"/>
</dbReference>
<dbReference type="EMBL" id="CP002684">
    <property type="protein sequence ID" value="AEE33006.1"/>
    <property type="molecule type" value="Genomic_DNA"/>
</dbReference>
<dbReference type="EMBL" id="DQ056496">
    <property type="protein sequence ID" value="AAY78653.1"/>
    <property type="molecule type" value="mRNA"/>
</dbReference>
<dbReference type="RefSeq" id="NP_175785.1">
    <property type="nucleotide sequence ID" value="NM_104259.1"/>
</dbReference>
<dbReference type="SMR" id="P0C035"/>
<dbReference type="STRING" id="3702.P0C035"/>
<dbReference type="PaxDb" id="3702-AT1G53820.1"/>
<dbReference type="EnsemblPlants" id="AT1G53820.1">
    <property type="protein sequence ID" value="AT1G53820.1"/>
    <property type="gene ID" value="AT1G53820"/>
</dbReference>
<dbReference type="GeneID" id="841819"/>
<dbReference type="Gramene" id="AT1G53820.1">
    <property type="protein sequence ID" value="AT1G53820.1"/>
    <property type="gene ID" value="AT1G53820"/>
</dbReference>
<dbReference type="KEGG" id="ath:AT1G53820"/>
<dbReference type="Araport" id="AT1G53820"/>
<dbReference type="TAIR" id="AT1G53820">
    <property type="gene designation" value="ATL60"/>
</dbReference>
<dbReference type="eggNOG" id="KOG0800">
    <property type="taxonomic scope" value="Eukaryota"/>
</dbReference>
<dbReference type="HOGENOM" id="CLU_066543_1_0_1"/>
<dbReference type="InParanoid" id="P0C035"/>
<dbReference type="OMA" id="FWWRVEQ"/>
<dbReference type="PhylomeDB" id="P0C035"/>
<dbReference type="UniPathway" id="UPA00143"/>
<dbReference type="PRO" id="PR:P0C035"/>
<dbReference type="Proteomes" id="UP000006548">
    <property type="component" value="Chromosome 1"/>
</dbReference>
<dbReference type="ExpressionAtlas" id="P0C035">
    <property type="expression patterns" value="baseline and differential"/>
</dbReference>
<dbReference type="GO" id="GO:0016020">
    <property type="term" value="C:membrane"/>
    <property type="evidence" value="ECO:0007669"/>
    <property type="project" value="UniProtKB-SubCell"/>
</dbReference>
<dbReference type="GO" id="GO:0016740">
    <property type="term" value="F:transferase activity"/>
    <property type="evidence" value="ECO:0007669"/>
    <property type="project" value="UniProtKB-KW"/>
</dbReference>
<dbReference type="GO" id="GO:0008270">
    <property type="term" value="F:zinc ion binding"/>
    <property type="evidence" value="ECO:0007669"/>
    <property type="project" value="UniProtKB-KW"/>
</dbReference>
<dbReference type="GO" id="GO:0016567">
    <property type="term" value="P:protein ubiquitination"/>
    <property type="evidence" value="ECO:0007669"/>
    <property type="project" value="UniProtKB-UniPathway"/>
</dbReference>
<dbReference type="CDD" id="cd16461">
    <property type="entry name" value="RING-H2_EL5-like"/>
    <property type="match status" value="1"/>
</dbReference>
<dbReference type="FunFam" id="3.30.40.10:FF:000475">
    <property type="entry name" value="RING-H2 finger protein ATL3"/>
    <property type="match status" value="1"/>
</dbReference>
<dbReference type="Gene3D" id="3.30.40.10">
    <property type="entry name" value="Zinc/RING finger domain, C3HC4 (zinc finger)"/>
    <property type="match status" value="1"/>
</dbReference>
<dbReference type="InterPro" id="IPR044600">
    <property type="entry name" value="ATL1/ATL16-like"/>
</dbReference>
<dbReference type="InterPro" id="IPR001841">
    <property type="entry name" value="Znf_RING"/>
</dbReference>
<dbReference type="InterPro" id="IPR013083">
    <property type="entry name" value="Znf_RING/FYVE/PHD"/>
</dbReference>
<dbReference type="PANTHER" id="PTHR46913">
    <property type="entry name" value="RING-H2 FINGER PROTEIN ATL16"/>
    <property type="match status" value="1"/>
</dbReference>
<dbReference type="PANTHER" id="PTHR46913:SF1">
    <property type="entry name" value="RING-H2 FINGER PROTEIN ATL16"/>
    <property type="match status" value="1"/>
</dbReference>
<dbReference type="Pfam" id="PF13639">
    <property type="entry name" value="zf-RING_2"/>
    <property type="match status" value="1"/>
</dbReference>
<dbReference type="SMART" id="SM00184">
    <property type="entry name" value="RING"/>
    <property type="match status" value="1"/>
</dbReference>
<dbReference type="SUPFAM" id="SSF57850">
    <property type="entry name" value="RING/U-box"/>
    <property type="match status" value="1"/>
</dbReference>
<dbReference type="PROSITE" id="PS50089">
    <property type="entry name" value="ZF_RING_2"/>
    <property type="match status" value="1"/>
</dbReference>
<proteinExistence type="evidence at transcript level"/>